<evidence type="ECO:0000250" key="1"/>
<evidence type="ECO:0000250" key="2">
    <source>
        <dbReference type="UniProtKB" id="P14324"/>
    </source>
</evidence>
<evidence type="ECO:0000250" key="3">
    <source>
        <dbReference type="UniProtKB" id="Q12051"/>
    </source>
</evidence>
<evidence type="ECO:0000255" key="4"/>
<evidence type="ECO:0000256" key="5">
    <source>
        <dbReference type="SAM" id="MobiDB-lite"/>
    </source>
</evidence>
<evidence type="ECO:0000305" key="6"/>
<reference key="1">
    <citation type="journal article" date="2000" name="DNA Res.">
        <title>Structural analysis of Arabidopsis thaliana chromosome 3. I. Sequence features of the regions of 4,504,864 bp covered by sixty P1 and TAC clones.</title>
        <authorList>
            <person name="Sato S."/>
            <person name="Nakamura Y."/>
            <person name="Kaneko T."/>
            <person name="Katoh T."/>
            <person name="Asamizu E."/>
            <person name="Tabata S."/>
        </authorList>
    </citation>
    <scope>NUCLEOTIDE SEQUENCE [LARGE SCALE GENOMIC DNA]</scope>
    <source>
        <strain>cv. Columbia</strain>
    </source>
</reference>
<reference key="2">
    <citation type="journal article" date="2017" name="Plant J.">
        <title>Araport11: a complete reannotation of the Arabidopsis thaliana reference genome.</title>
        <authorList>
            <person name="Cheng C.Y."/>
            <person name="Krishnakumar V."/>
            <person name="Chan A.P."/>
            <person name="Thibaud-Nissen F."/>
            <person name="Schobel S."/>
            <person name="Town C.D."/>
        </authorList>
    </citation>
    <scope>GENOME REANNOTATION</scope>
    <source>
        <strain>cv. Columbia</strain>
    </source>
</reference>
<gene>
    <name type="ordered locus">At3g14510</name>
    <name type="ORF">MOA2.15</name>
</gene>
<protein>
    <recommendedName>
        <fullName>Putative geranylgeranyl pyrophosphate synthase 8, chloroplastic</fullName>
        <shortName>GGPP synthase 8</shortName>
        <shortName>GGPS8</shortName>
        <ecNumber>2.5.1.-</ecNumber>
    </recommendedName>
    <alternativeName>
        <fullName>(2E,6E)-farnesyl diphosphate synthase 8</fullName>
    </alternativeName>
    <alternativeName>
        <fullName>Dimethylallyltranstransferase 8</fullName>
        <ecNumber>2.5.1.1</ecNumber>
    </alternativeName>
    <alternativeName>
        <fullName>Farnesyl diphosphate synthase 8</fullName>
    </alternativeName>
    <alternativeName>
        <fullName>Farnesyltranstransferase 8</fullName>
        <ecNumber>2.5.1.29</ecNumber>
    </alternativeName>
    <alternativeName>
        <fullName>Geranyltranstransferase 8</fullName>
        <ecNumber>2.5.1.10</ecNumber>
    </alternativeName>
</protein>
<accession>Q9LRR0</accession>
<accession>F4IW66</accession>
<keyword id="KW-0125">Carotenoid biosynthesis</keyword>
<keyword id="KW-0150">Chloroplast</keyword>
<keyword id="KW-0414">Isoprene biosynthesis</keyword>
<keyword id="KW-0460">Magnesium</keyword>
<keyword id="KW-0479">Metal-binding</keyword>
<keyword id="KW-0934">Plastid</keyword>
<keyword id="KW-1185">Reference proteome</keyword>
<keyword id="KW-0808">Transferase</keyword>
<keyword id="KW-0809">Transit peptide</keyword>
<name>GGPP8_ARATH</name>
<dbReference type="EC" id="2.5.1.-"/>
<dbReference type="EC" id="2.5.1.1"/>
<dbReference type="EC" id="2.5.1.29"/>
<dbReference type="EC" id="2.5.1.10"/>
<dbReference type="EMBL" id="AB028617">
    <property type="protein sequence ID" value="BAB01343.1"/>
    <property type="status" value="ALT_SEQ"/>
    <property type="molecule type" value="Genomic_DNA"/>
</dbReference>
<dbReference type="EMBL" id="CP002686">
    <property type="protein sequence ID" value="AEE75533.1"/>
    <property type="status" value="ALT_SEQ"/>
    <property type="molecule type" value="Genomic_DNA"/>
</dbReference>
<dbReference type="RefSeq" id="NP_188069.1">
    <property type="nucleotide sequence ID" value="NM_112311.2"/>
</dbReference>
<dbReference type="SMR" id="Q9LRR0"/>
<dbReference type="FunCoup" id="Q9LRR0">
    <property type="interactions" value="17"/>
</dbReference>
<dbReference type="STRING" id="3702.Q9LRR0"/>
<dbReference type="PeptideAtlas" id="Q9LRR0"/>
<dbReference type="GeneID" id="820674"/>
<dbReference type="KEGG" id="ath:AT3G14510"/>
<dbReference type="Araport" id="AT3G14510"/>
<dbReference type="TAIR" id="AT3G14510"/>
<dbReference type="HOGENOM" id="CLU_014015_0_0_1"/>
<dbReference type="InParanoid" id="Q9LRR0"/>
<dbReference type="PhylomeDB" id="Q9LRR0"/>
<dbReference type="BioCyc" id="ARA:AT3G14510-MONOMER"/>
<dbReference type="UniPathway" id="UPA00259">
    <property type="reaction ID" value="UER00368"/>
</dbReference>
<dbReference type="UniPathway" id="UPA00260">
    <property type="reaction ID" value="UER00369"/>
</dbReference>
<dbReference type="UniPathway" id="UPA00389">
    <property type="reaction ID" value="UER00564"/>
</dbReference>
<dbReference type="Proteomes" id="UP000006548">
    <property type="component" value="Chromosome 3"/>
</dbReference>
<dbReference type="ExpressionAtlas" id="Q9LRR0">
    <property type="expression patterns" value="baseline and differential"/>
</dbReference>
<dbReference type="GO" id="GO:0009507">
    <property type="term" value="C:chloroplast"/>
    <property type="evidence" value="ECO:0007669"/>
    <property type="project" value="UniProtKB-SubCell"/>
</dbReference>
<dbReference type="GO" id="GO:0004337">
    <property type="term" value="F:(2E,6E)-farnesyl diphosphate synthase activity"/>
    <property type="evidence" value="ECO:0007669"/>
    <property type="project" value="UniProtKB-EC"/>
</dbReference>
<dbReference type="GO" id="GO:0004161">
    <property type="term" value="F:dimethylallyltranstransferase activity"/>
    <property type="evidence" value="ECO:0007669"/>
    <property type="project" value="UniProtKB-EC"/>
</dbReference>
<dbReference type="GO" id="GO:0004311">
    <property type="term" value="F:geranylgeranyl diphosphate synthase activity"/>
    <property type="evidence" value="ECO:0000318"/>
    <property type="project" value="GO_Central"/>
</dbReference>
<dbReference type="GO" id="GO:0046872">
    <property type="term" value="F:metal ion binding"/>
    <property type="evidence" value="ECO:0007669"/>
    <property type="project" value="UniProtKB-KW"/>
</dbReference>
<dbReference type="GO" id="GO:0016117">
    <property type="term" value="P:carotenoid biosynthetic process"/>
    <property type="evidence" value="ECO:0007669"/>
    <property type="project" value="UniProtKB-KW"/>
</dbReference>
<dbReference type="GO" id="GO:0045337">
    <property type="term" value="P:farnesyl diphosphate biosynthetic process"/>
    <property type="evidence" value="ECO:0007669"/>
    <property type="project" value="UniProtKB-UniPathway"/>
</dbReference>
<dbReference type="GO" id="GO:0033384">
    <property type="term" value="P:geranyl diphosphate biosynthetic process"/>
    <property type="evidence" value="ECO:0007669"/>
    <property type="project" value="UniProtKB-UniPathway"/>
</dbReference>
<dbReference type="GO" id="GO:0033386">
    <property type="term" value="P:geranylgeranyl diphosphate biosynthetic process"/>
    <property type="evidence" value="ECO:0007669"/>
    <property type="project" value="UniProtKB-UniPathway"/>
</dbReference>
<dbReference type="CDD" id="cd00685">
    <property type="entry name" value="Trans_IPPS_HT"/>
    <property type="match status" value="1"/>
</dbReference>
<dbReference type="FunFam" id="1.10.600.10:FF:000001">
    <property type="entry name" value="Geranylgeranyl diphosphate synthase"/>
    <property type="match status" value="1"/>
</dbReference>
<dbReference type="Gene3D" id="1.10.600.10">
    <property type="entry name" value="Farnesyl Diphosphate Synthase"/>
    <property type="match status" value="1"/>
</dbReference>
<dbReference type="InterPro" id="IPR008949">
    <property type="entry name" value="Isoprenoid_synthase_dom_sf"/>
</dbReference>
<dbReference type="InterPro" id="IPR000092">
    <property type="entry name" value="Polyprenyl_synt"/>
</dbReference>
<dbReference type="InterPro" id="IPR033749">
    <property type="entry name" value="Polyprenyl_synt_CS"/>
</dbReference>
<dbReference type="InterPro" id="IPR053378">
    <property type="entry name" value="Prenyl_diphosphate_synthase"/>
</dbReference>
<dbReference type="NCBIfam" id="NF045485">
    <property type="entry name" value="FPPsyn"/>
    <property type="match status" value="1"/>
</dbReference>
<dbReference type="PANTHER" id="PTHR43281">
    <property type="entry name" value="FARNESYL DIPHOSPHATE SYNTHASE"/>
    <property type="match status" value="1"/>
</dbReference>
<dbReference type="PANTHER" id="PTHR43281:SF11">
    <property type="entry name" value="GERANYLGERANYL PYROPHOSPHATE SYNTHASE 11, CHLOROPLASTIC-RELATED"/>
    <property type="match status" value="1"/>
</dbReference>
<dbReference type="Pfam" id="PF00348">
    <property type="entry name" value="polyprenyl_synt"/>
    <property type="match status" value="1"/>
</dbReference>
<dbReference type="SFLD" id="SFLDS00005">
    <property type="entry name" value="Isoprenoid_Synthase_Type_I"/>
    <property type="match status" value="1"/>
</dbReference>
<dbReference type="SFLD" id="SFLDG01017">
    <property type="entry name" value="Polyprenyl_Transferase_Like"/>
    <property type="match status" value="1"/>
</dbReference>
<dbReference type="SUPFAM" id="SSF48576">
    <property type="entry name" value="Terpenoid synthases"/>
    <property type="match status" value="1"/>
</dbReference>
<dbReference type="PROSITE" id="PS00723">
    <property type="entry name" value="POLYPRENYL_SYNTHASE_1"/>
    <property type="match status" value="1"/>
</dbReference>
<dbReference type="PROSITE" id="PS00444">
    <property type="entry name" value="POLYPRENYL_SYNTHASE_2"/>
    <property type="match status" value="1"/>
</dbReference>
<sequence>MATTVHLSSFSLFIQSRGRRDNSISSVKSLKKRTGLSPSSALTSQGGRDMIPPQGKSNDHNSAFDFKLYMIRKAESVNAALDVSIVPLREPLTVQEAVRYSLLAGGKRVRPLLCIAVCELVGGDEATAMSAACAVEMIHTSSLIHDDLPCMDNADLRRGKPTNHKVFGEDMAVLAGDALLALAFEHMTVVSSGLVASERMIRAVVELARAIGTKGLVAGQVVDLSSERLNPHDVGLERLEFIHLHKTAALLEAAAVIGAIMGGGTEEEIEKLRKYARCIGLLFQVVDDILDVTKSTEELGKTAGKDVMAGKLTYPRLIGLERSREVAEKLSREAEEQLLGFESDKAAPLVALASYISCRND</sequence>
<proteinExistence type="uncertain"/>
<organism>
    <name type="scientific">Arabidopsis thaliana</name>
    <name type="common">Mouse-ear cress</name>
    <dbReference type="NCBI Taxonomy" id="3702"/>
    <lineage>
        <taxon>Eukaryota</taxon>
        <taxon>Viridiplantae</taxon>
        <taxon>Streptophyta</taxon>
        <taxon>Embryophyta</taxon>
        <taxon>Tracheophyta</taxon>
        <taxon>Spermatophyta</taxon>
        <taxon>Magnoliopsida</taxon>
        <taxon>eudicotyledons</taxon>
        <taxon>Gunneridae</taxon>
        <taxon>Pentapetalae</taxon>
        <taxon>rosids</taxon>
        <taxon>malvids</taxon>
        <taxon>Brassicales</taxon>
        <taxon>Brassicaceae</taxon>
        <taxon>Camelineae</taxon>
        <taxon>Arabidopsis</taxon>
    </lineage>
</organism>
<feature type="transit peptide" description="Chloroplast" evidence="4">
    <location>
        <begin position="1"/>
        <end position="39"/>
    </location>
</feature>
<feature type="chain" id="PRO_0000402122" description="Putative geranylgeranyl pyrophosphate synthase 8, chloroplastic">
    <location>
        <begin position="40"/>
        <end position="361"/>
    </location>
</feature>
<feature type="region of interest" description="Disordered" evidence="5">
    <location>
        <begin position="24"/>
        <end position="58"/>
    </location>
</feature>
<feature type="compositionally biased region" description="Polar residues" evidence="5">
    <location>
        <begin position="36"/>
        <end position="46"/>
    </location>
</feature>
<feature type="binding site" evidence="2">
    <location>
        <position position="107"/>
    </location>
    <ligand>
        <name>isopentenyl diphosphate</name>
        <dbReference type="ChEBI" id="CHEBI:128769"/>
    </ligand>
</feature>
<feature type="binding site" evidence="2">
    <location>
        <position position="110"/>
    </location>
    <ligand>
        <name>isopentenyl diphosphate</name>
        <dbReference type="ChEBI" id="CHEBI:128769"/>
    </ligand>
</feature>
<feature type="binding site" evidence="3">
    <location>
        <position position="139"/>
    </location>
    <ligand>
        <name>isopentenyl diphosphate</name>
        <dbReference type="ChEBI" id="CHEBI:128769"/>
    </ligand>
</feature>
<feature type="binding site" evidence="2">
    <location>
        <position position="146"/>
    </location>
    <ligand>
        <name>Mg(2+)</name>
        <dbReference type="ChEBI" id="CHEBI:18420"/>
        <label>1</label>
    </ligand>
</feature>
<feature type="binding site" evidence="2">
    <location>
        <position position="146"/>
    </location>
    <ligand>
        <name>Mg(2+)</name>
        <dbReference type="ChEBI" id="CHEBI:18420"/>
        <label>2</label>
    </ligand>
</feature>
<feature type="binding site" evidence="2">
    <location>
        <position position="152"/>
    </location>
    <ligand>
        <name>Mg(2+)</name>
        <dbReference type="ChEBI" id="CHEBI:18420"/>
        <label>1</label>
    </ligand>
</feature>
<feature type="binding site" evidence="2">
    <location>
        <position position="152"/>
    </location>
    <ligand>
        <name>Mg(2+)</name>
        <dbReference type="ChEBI" id="CHEBI:18420"/>
        <label>2</label>
    </ligand>
</feature>
<feature type="binding site" evidence="1">
    <location>
        <position position="157"/>
    </location>
    <ligand>
        <name>dimethylallyl diphosphate</name>
        <dbReference type="ChEBI" id="CHEBI:57623"/>
    </ligand>
</feature>
<feature type="binding site" evidence="2">
    <location>
        <position position="158"/>
    </location>
    <ligand>
        <name>isopentenyl diphosphate</name>
        <dbReference type="ChEBI" id="CHEBI:128769"/>
    </ligand>
</feature>
<feature type="binding site" evidence="1">
    <location>
        <position position="246"/>
    </location>
    <ligand>
        <name>dimethylallyl diphosphate</name>
        <dbReference type="ChEBI" id="CHEBI:57623"/>
    </ligand>
</feature>
<feature type="binding site" evidence="1">
    <location>
        <position position="247"/>
    </location>
    <ligand>
        <name>dimethylallyl diphosphate</name>
        <dbReference type="ChEBI" id="CHEBI:57623"/>
    </ligand>
</feature>
<feature type="binding site" evidence="1">
    <location>
        <position position="284"/>
    </location>
    <ligand>
        <name>dimethylallyl diphosphate</name>
        <dbReference type="ChEBI" id="CHEBI:57623"/>
    </ligand>
</feature>
<feature type="binding site" evidence="1">
    <location>
        <position position="301"/>
    </location>
    <ligand>
        <name>dimethylallyl diphosphate</name>
        <dbReference type="ChEBI" id="CHEBI:57623"/>
    </ligand>
</feature>
<feature type="binding site" evidence="1">
    <location>
        <position position="311"/>
    </location>
    <ligand>
        <name>dimethylallyl diphosphate</name>
        <dbReference type="ChEBI" id="CHEBI:57623"/>
    </ligand>
</feature>
<comment type="function">
    <text evidence="1">Catalyzes the trans-addition of the three molecules of IPP onto DMAPP to form geranylgeranyl pyrophosphate.</text>
</comment>
<comment type="catalytic activity">
    <reaction>
        <text>isopentenyl diphosphate + dimethylallyl diphosphate = (2E)-geranyl diphosphate + diphosphate</text>
        <dbReference type="Rhea" id="RHEA:22408"/>
        <dbReference type="ChEBI" id="CHEBI:33019"/>
        <dbReference type="ChEBI" id="CHEBI:57623"/>
        <dbReference type="ChEBI" id="CHEBI:58057"/>
        <dbReference type="ChEBI" id="CHEBI:128769"/>
        <dbReference type="EC" id="2.5.1.1"/>
    </reaction>
</comment>
<comment type="catalytic activity">
    <reaction>
        <text>isopentenyl diphosphate + (2E)-geranyl diphosphate = (2E,6E)-farnesyl diphosphate + diphosphate</text>
        <dbReference type="Rhea" id="RHEA:19361"/>
        <dbReference type="ChEBI" id="CHEBI:33019"/>
        <dbReference type="ChEBI" id="CHEBI:58057"/>
        <dbReference type="ChEBI" id="CHEBI:128769"/>
        <dbReference type="ChEBI" id="CHEBI:175763"/>
        <dbReference type="EC" id="2.5.1.10"/>
    </reaction>
</comment>
<comment type="catalytic activity">
    <reaction>
        <text>isopentenyl diphosphate + (2E,6E)-farnesyl diphosphate = (2E,6E,10E)-geranylgeranyl diphosphate + diphosphate</text>
        <dbReference type="Rhea" id="RHEA:17653"/>
        <dbReference type="ChEBI" id="CHEBI:33019"/>
        <dbReference type="ChEBI" id="CHEBI:58756"/>
        <dbReference type="ChEBI" id="CHEBI:128769"/>
        <dbReference type="ChEBI" id="CHEBI:175763"/>
        <dbReference type="EC" id="2.5.1.29"/>
    </reaction>
</comment>
<comment type="cofactor">
    <cofactor evidence="1">
        <name>Mg(2+)</name>
        <dbReference type="ChEBI" id="CHEBI:18420"/>
    </cofactor>
    <text evidence="1">Binds 2 Mg(2+) ions per subunit.</text>
</comment>
<comment type="pathway">
    <text>Isoprenoid biosynthesis; farnesyl diphosphate biosynthesis; farnesyl diphosphate from geranyl diphosphate and isopentenyl diphosphate: step 1/1.</text>
</comment>
<comment type="pathway">
    <text>Isoprenoid biosynthesis; geranyl diphosphate biosynthesis; geranyl diphosphate from dimethylallyl diphosphate and isopentenyl diphosphate: step 1/1.</text>
</comment>
<comment type="pathway">
    <text>Isoprenoid biosynthesis; geranylgeranyl diphosphate biosynthesis; geranylgeranyl diphosphate from farnesyl diphosphate and isopentenyl diphosphate: step 1/1.</text>
</comment>
<comment type="subunit">
    <text evidence="1">Monomer.</text>
</comment>
<comment type="subcellular location">
    <subcellularLocation>
        <location evidence="6">Plastid</location>
        <location evidence="6">Chloroplast</location>
    </subcellularLocation>
</comment>
<comment type="similarity">
    <text evidence="6">Belongs to the FPP/GGPP synthase family.</text>
</comment>
<comment type="caution">
    <text evidence="6">Could be the product of a pseudogene.</text>
</comment>
<comment type="sequence caution" evidence="6">
    <conflict type="erroneous gene model prediction">
        <sequence resource="EMBL-CDS" id="AEE75533"/>
    </conflict>
</comment>
<comment type="sequence caution" evidence="6">
    <conflict type="frameshift">
        <sequence resource="EMBL-CDS" id="AEE75533"/>
    </conflict>
</comment>
<comment type="sequence caution" evidence="6">
    <conflict type="erroneous gene model prediction">
        <sequence resource="EMBL-CDS" id="BAB01343"/>
    </conflict>
</comment>
<comment type="sequence caution" evidence="6">
    <conflict type="frameshift">
        <sequence resource="EMBL-CDS" id="BAB01343"/>
    </conflict>
</comment>